<organism>
    <name type="scientific">Listeria monocytogenes serovar 1/2a (strain ATCC BAA-679 / EGD-e)</name>
    <dbReference type="NCBI Taxonomy" id="169963"/>
    <lineage>
        <taxon>Bacteria</taxon>
        <taxon>Bacillati</taxon>
        <taxon>Bacillota</taxon>
        <taxon>Bacilli</taxon>
        <taxon>Bacillales</taxon>
        <taxon>Listeriaceae</taxon>
        <taxon>Listeria</taxon>
    </lineage>
</organism>
<gene>
    <name evidence="1" type="primary">rplU</name>
    <name type="ordered locus">lmo1542</name>
</gene>
<evidence type="ECO:0000255" key="1">
    <source>
        <dbReference type="HAMAP-Rule" id="MF_01363"/>
    </source>
</evidence>
<evidence type="ECO:0000305" key="2"/>
<evidence type="ECO:0007829" key="3">
    <source>
        <dbReference type="PDB" id="8A57"/>
    </source>
</evidence>
<dbReference type="EMBL" id="AL591979">
    <property type="protein sequence ID" value="CAC99620.1"/>
    <property type="molecule type" value="Genomic_DNA"/>
</dbReference>
<dbReference type="PIR" id="AF1267">
    <property type="entry name" value="AF1267"/>
</dbReference>
<dbReference type="RefSeq" id="NP_465067.1">
    <property type="nucleotide sequence ID" value="NC_003210.1"/>
</dbReference>
<dbReference type="RefSeq" id="WP_003726868.1">
    <property type="nucleotide sequence ID" value="NZ_CP149495.1"/>
</dbReference>
<dbReference type="PDB" id="7NHN">
    <property type="method" value="EM"/>
    <property type="resolution" value="2.90 A"/>
    <property type="chains" value="U=1-102"/>
</dbReference>
<dbReference type="PDB" id="8A57">
    <property type="method" value="EM"/>
    <property type="resolution" value="2.30 A"/>
    <property type="chains" value="U=1-102"/>
</dbReference>
<dbReference type="PDB" id="8A5I">
    <property type="method" value="EM"/>
    <property type="resolution" value="2.30 A"/>
    <property type="chains" value="U=1-102"/>
</dbReference>
<dbReference type="PDB" id="8A63">
    <property type="method" value="EM"/>
    <property type="resolution" value="3.10 A"/>
    <property type="chains" value="U=1-102"/>
</dbReference>
<dbReference type="PDBsum" id="7NHN"/>
<dbReference type="PDBsum" id="8A57"/>
<dbReference type="PDBsum" id="8A5I"/>
<dbReference type="PDBsum" id="8A63"/>
<dbReference type="EMDB" id="EMD-12334"/>
<dbReference type="EMDB" id="EMD-15161"/>
<dbReference type="EMDB" id="EMD-15175"/>
<dbReference type="EMDB" id="EMD-15204"/>
<dbReference type="SMR" id="Q8Y6Y9"/>
<dbReference type="STRING" id="169963.gene:17594199"/>
<dbReference type="PaxDb" id="169963-lmo1542"/>
<dbReference type="EnsemblBacteria" id="CAC99620">
    <property type="protein sequence ID" value="CAC99620"/>
    <property type="gene ID" value="CAC99620"/>
</dbReference>
<dbReference type="GeneID" id="93239421"/>
<dbReference type="GeneID" id="987770"/>
<dbReference type="KEGG" id="lmo:lmo1542"/>
<dbReference type="PATRIC" id="fig|169963.11.peg.1583"/>
<dbReference type="eggNOG" id="COG0261">
    <property type="taxonomic scope" value="Bacteria"/>
</dbReference>
<dbReference type="HOGENOM" id="CLU_061463_3_2_9"/>
<dbReference type="OrthoDB" id="9813334at2"/>
<dbReference type="PhylomeDB" id="Q8Y6Y9"/>
<dbReference type="BioCyc" id="LMON169963:LMO1542-MONOMER"/>
<dbReference type="Proteomes" id="UP000000817">
    <property type="component" value="Chromosome"/>
</dbReference>
<dbReference type="GO" id="GO:0005737">
    <property type="term" value="C:cytoplasm"/>
    <property type="evidence" value="ECO:0007669"/>
    <property type="project" value="UniProtKB-ARBA"/>
</dbReference>
<dbReference type="GO" id="GO:1990904">
    <property type="term" value="C:ribonucleoprotein complex"/>
    <property type="evidence" value="ECO:0007669"/>
    <property type="project" value="UniProtKB-KW"/>
</dbReference>
<dbReference type="GO" id="GO:0005840">
    <property type="term" value="C:ribosome"/>
    <property type="evidence" value="ECO:0007669"/>
    <property type="project" value="UniProtKB-KW"/>
</dbReference>
<dbReference type="GO" id="GO:0019843">
    <property type="term" value="F:rRNA binding"/>
    <property type="evidence" value="ECO:0007669"/>
    <property type="project" value="UniProtKB-UniRule"/>
</dbReference>
<dbReference type="GO" id="GO:0003735">
    <property type="term" value="F:structural constituent of ribosome"/>
    <property type="evidence" value="ECO:0000318"/>
    <property type="project" value="GO_Central"/>
</dbReference>
<dbReference type="GO" id="GO:0006412">
    <property type="term" value="P:translation"/>
    <property type="evidence" value="ECO:0007669"/>
    <property type="project" value="UniProtKB-UniRule"/>
</dbReference>
<dbReference type="HAMAP" id="MF_01363">
    <property type="entry name" value="Ribosomal_bL21"/>
    <property type="match status" value="1"/>
</dbReference>
<dbReference type="InterPro" id="IPR028909">
    <property type="entry name" value="bL21-like"/>
</dbReference>
<dbReference type="InterPro" id="IPR036164">
    <property type="entry name" value="bL21-like_sf"/>
</dbReference>
<dbReference type="InterPro" id="IPR001787">
    <property type="entry name" value="Ribosomal_bL21"/>
</dbReference>
<dbReference type="InterPro" id="IPR018258">
    <property type="entry name" value="Ribosomal_bL21_CS"/>
</dbReference>
<dbReference type="NCBIfam" id="TIGR00061">
    <property type="entry name" value="L21"/>
    <property type="match status" value="1"/>
</dbReference>
<dbReference type="PANTHER" id="PTHR21349">
    <property type="entry name" value="50S RIBOSOMAL PROTEIN L21"/>
    <property type="match status" value="1"/>
</dbReference>
<dbReference type="PANTHER" id="PTHR21349:SF0">
    <property type="entry name" value="LARGE RIBOSOMAL SUBUNIT PROTEIN BL21M"/>
    <property type="match status" value="1"/>
</dbReference>
<dbReference type="Pfam" id="PF00829">
    <property type="entry name" value="Ribosomal_L21p"/>
    <property type="match status" value="1"/>
</dbReference>
<dbReference type="SUPFAM" id="SSF141091">
    <property type="entry name" value="L21p-like"/>
    <property type="match status" value="1"/>
</dbReference>
<dbReference type="PROSITE" id="PS01169">
    <property type="entry name" value="RIBOSOMAL_L21"/>
    <property type="match status" value="1"/>
</dbReference>
<name>RL21_LISMO</name>
<protein>
    <recommendedName>
        <fullName evidence="1">Large ribosomal subunit protein bL21</fullName>
    </recommendedName>
    <alternativeName>
        <fullName evidence="2">50S ribosomal protein L21</fullName>
    </alternativeName>
</protein>
<keyword id="KW-0002">3D-structure</keyword>
<keyword id="KW-1185">Reference proteome</keyword>
<keyword id="KW-0687">Ribonucleoprotein</keyword>
<keyword id="KW-0689">Ribosomal protein</keyword>
<keyword id="KW-0694">RNA-binding</keyword>
<keyword id="KW-0699">rRNA-binding</keyword>
<reference key="1">
    <citation type="journal article" date="2001" name="Science">
        <title>Comparative genomics of Listeria species.</title>
        <authorList>
            <person name="Glaser P."/>
            <person name="Frangeul L."/>
            <person name="Buchrieser C."/>
            <person name="Rusniok C."/>
            <person name="Amend A."/>
            <person name="Baquero F."/>
            <person name="Berche P."/>
            <person name="Bloecker H."/>
            <person name="Brandt P."/>
            <person name="Chakraborty T."/>
            <person name="Charbit A."/>
            <person name="Chetouani F."/>
            <person name="Couve E."/>
            <person name="de Daruvar A."/>
            <person name="Dehoux P."/>
            <person name="Domann E."/>
            <person name="Dominguez-Bernal G."/>
            <person name="Duchaud E."/>
            <person name="Durant L."/>
            <person name="Dussurget O."/>
            <person name="Entian K.-D."/>
            <person name="Fsihi H."/>
            <person name="Garcia-del Portillo F."/>
            <person name="Garrido P."/>
            <person name="Gautier L."/>
            <person name="Goebel W."/>
            <person name="Gomez-Lopez N."/>
            <person name="Hain T."/>
            <person name="Hauf J."/>
            <person name="Jackson D."/>
            <person name="Jones L.-M."/>
            <person name="Kaerst U."/>
            <person name="Kreft J."/>
            <person name="Kuhn M."/>
            <person name="Kunst F."/>
            <person name="Kurapkat G."/>
            <person name="Madueno E."/>
            <person name="Maitournam A."/>
            <person name="Mata Vicente J."/>
            <person name="Ng E."/>
            <person name="Nedjari H."/>
            <person name="Nordsiek G."/>
            <person name="Novella S."/>
            <person name="de Pablos B."/>
            <person name="Perez-Diaz J.-C."/>
            <person name="Purcell R."/>
            <person name="Remmel B."/>
            <person name="Rose M."/>
            <person name="Schlueter T."/>
            <person name="Simoes N."/>
            <person name="Tierrez A."/>
            <person name="Vazquez-Boland J.-A."/>
            <person name="Voss H."/>
            <person name="Wehland J."/>
            <person name="Cossart P."/>
        </authorList>
    </citation>
    <scope>NUCLEOTIDE SEQUENCE [LARGE SCALE GENOMIC DNA]</scope>
    <source>
        <strain>ATCC BAA-679 / EGD-e</strain>
    </source>
</reference>
<comment type="function">
    <text evidence="1">This protein binds to 23S rRNA in the presence of protein L20.</text>
</comment>
<comment type="subunit">
    <text evidence="1">Part of the 50S ribosomal subunit. Contacts protein L20.</text>
</comment>
<comment type="similarity">
    <text evidence="1">Belongs to the bacterial ribosomal protein bL21 family.</text>
</comment>
<accession>Q8Y6Y9</accession>
<proteinExistence type="evidence at protein level"/>
<feature type="chain" id="PRO_0000269338" description="Large ribosomal subunit protein bL21">
    <location>
        <begin position="1"/>
        <end position="102"/>
    </location>
</feature>
<feature type="strand" evidence="3">
    <location>
        <begin position="3"/>
        <end position="7"/>
    </location>
</feature>
<feature type="strand" evidence="3">
    <location>
        <begin position="10"/>
        <end position="14"/>
    </location>
</feature>
<feature type="strand" evidence="3">
    <location>
        <begin position="19"/>
        <end position="23"/>
    </location>
</feature>
<feature type="strand" evidence="3">
    <location>
        <begin position="32"/>
        <end position="35"/>
    </location>
</feature>
<feature type="strand" evidence="3">
    <location>
        <begin position="38"/>
        <end position="41"/>
    </location>
</feature>
<feature type="strand" evidence="3">
    <location>
        <begin position="43"/>
        <end position="45"/>
    </location>
</feature>
<feature type="strand" evidence="3">
    <location>
        <begin position="50"/>
        <end position="52"/>
    </location>
</feature>
<feature type="strand" evidence="3">
    <location>
        <begin position="57"/>
        <end position="67"/>
    </location>
</feature>
<feature type="strand" evidence="3">
    <location>
        <begin position="71"/>
        <end position="77"/>
    </location>
</feature>
<feature type="turn" evidence="3">
    <location>
        <begin position="78"/>
        <end position="81"/>
    </location>
</feature>
<feature type="strand" evidence="3">
    <location>
        <begin position="82"/>
        <end position="88"/>
    </location>
</feature>
<feature type="strand" evidence="3">
    <location>
        <begin position="91"/>
        <end position="101"/>
    </location>
</feature>
<sequence>MYAIIETGGKQIKVEAGQEIYVEKLAGEVGDVVTFDKVLFVGGDSAKVGVPFVEGATVTAKVEKQGRAKKLTVYKYKPKKNYHKKQGHRQPYTKLTIDAINA</sequence>